<protein>
    <recommendedName>
        <fullName evidence="1">Photosystem I P700 chlorophyll a apoprotein A1</fullName>
        <ecNumber evidence="1">1.97.1.12</ecNumber>
    </recommendedName>
    <alternativeName>
        <fullName evidence="1">PSI-A</fullName>
    </alternativeName>
    <alternativeName>
        <fullName evidence="1">PsaA</fullName>
    </alternativeName>
</protein>
<keyword id="KW-0004">4Fe-4S</keyword>
<keyword id="KW-0148">Chlorophyll</keyword>
<keyword id="KW-0150">Chloroplast</keyword>
<keyword id="KW-0157">Chromophore</keyword>
<keyword id="KW-0249">Electron transport</keyword>
<keyword id="KW-0408">Iron</keyword>
<keyword id="KW-0411">Iron-sulfur</keyword>
<keyword id="KW-0460">Magnesium</keyword>
<keyword id="KW-0472">Membrane</keyword>
<keyword id="KW-0479">Metal-binding</keyword>
<keyword id="KW-0560">Oxidoreductase</keyword>
<keyword id="KW-0602">Photosynthesis</keyword>
<keyword id="KW-0603">Photosystem I</keyword>
<keyword id="KW-0934">Plastid</keyword>
<keyword id="KW-1185">Reference proteome</keyword>
<keyword id="KW-0793">Thylakoid</keyword>
<keyword id="KW-0812">Transmembrane</keyword>
<keyword id="KW-1133">Transmembrane helix</keyword>
<keyword id="KW-0813">Transport</keyword>
<proteinExistence type="inferred from homology"/>
<reference key="1">
    <citation type="journal article" date="2006" name="Science">
        <title>The genome of black cottonwood, Populus trichocarpa (Torr. &amp; Gray).</title>
        <authorList>
            <person name="Tuskan G.A."/>
            <person name="Difazio S."/>
            <person name="Jansson S."/>
            <person name="Bohlmann J."/>
            <person name="Grigoriev I."/>
            <person name="Hellsten U."/>
            <person name="Putnam N."/>
            <person name="Ralph S."/>
            <person name="Rombauts S."/>
            <person name="Salamov A."/>
            <person name="Schein J."/>
            <person name="Sterck L."/>
            <person name="Aerts A."/>
            <person name="Bhalerao R.R."/>
            <person name="Bhalerao R.P."/>
            <person name="Blaudez D."/>
            <person name="Boerjan W."/>
            <person name="Brun A."/>
            <person name="Brunner A."/>
            <person name="Busov V."/>
            <person name="Campbell M."/>
            <person name="Carlson J."/>
            <person name="Chalot M."/>
            <person name="Chapman J."/>
            <person name="Chen G.-L."/>
            <person name="Cooper D."/>
            <person name="Coutinho P.M."/>
            <person name="Couturier J."/>
            <person name="Covert S."/>
            <person name="Cronk Q."/>
            <person name="Cunningham R."/>
            <person name="Davis J."/>
            <person name="Degroeve S."/>
            <person name="Dejardin A."/>
            <person name="dePamphilis C.W."/>
            <person name="Detter J."/>
            <person name="Dirks B."/>
            <person name="Dubchak I."/>
            <person name="Duplessis S."/>
            <person name="Ehlting J."/>
            <person name="Ellis B."/>
            <person name="Gendler K."/>
            <person name="Goodstein D."/>
            <person name="Gribskov M."/>
            <person name="Grimwood J."/>
            <person name="Groover A."/>
            <person name="Gunter L."/>
            <person name="Hamberger B."/>
            <person name="Heinze B."/>
            <person name="Helariutta Y."/>
            <person name="Henrissat B."/>
            <person name="Holligan D."/>
            <person name="Holt R."/>
            <person name="Huang W."/>
            <person name="Islam-Faridi N."/>
            <person name="Jones S."/>
            <person name="Jones-Rhoades M."/>
            <person name="Jorgensen R."/>
            <person name="Joshi C."/>
            <person name="Kangasjaervi J."/>
            <person name="Karlsson J."/>
            <person name="Kelleher C."/>
            <person name="Kirkpatrick R."/>
            <person name="Kirst M."/>
            <person name="Kohler A."/>
            <person name="Kalluri U."/>
            <person name="Larimer F."/>
            <person name="Leebens-Mack J."/>
            <person name="Leple J.-C."/>
            <person name="Locascio P."/>
            <person name="Lou Y."/>
            <person name="Lucas S."/>
            <person name="Martin F."/>
            <person name="Montanini B."/>
            <person name="Napoli C."/>
            <person name="Nelson D.R."/>
            <person name="Nelson C."/>
            <person name="Nieminen K."/>
            <person name="Nilsson O."/>
            <person name="Pereda V."/>
            <person name="Peter G."/>
            <person name="Philippe R."/>
            <person name="Pilate G."/>
            <person name="Poliakov A."/>
            <person name="Razumovskaya J."/>
            <person name="Richardson P."/>
            <person name="Rinaldi C."/>
            <person name="Ritland K."/>
            <person name="Rouze P."/>
            <person name="Ryaboy D."/>
            <person name="Schmutz J."/>
            <person name="Schrader J."/>
            <person name="Segerman B."/>
            <person name="Shin H."/>
            <person name="Siddiqui A."/>
            <person name="Sterky F."/>
            <person name="Terry A."/>
            <person name="Tsai C.-J."/>
            <person name="Uberbacher E."/>
            <person name="Unneberg P."/>
            <person name="Vahala J."/>
            <person name="Wall K."/>
            <person name="Wessler S."/>
            <person name="Yang G."/>
            <person name="Yin T."/>
            <person name="Douglas C."/>
            <person name="Marra M."/>
            <person name="Sandberg G."/>
            <person name="Van de Peer Y."/>
            <person name="Rokhsar D.S."/>
        </authorList>
    </citation>
    <scope>NUCLEOTIDE SEQUENCE [LARGE SCALE GENOMIC DNA]</scope>
    <source>
        <strain>cv. Nisqually</strain>
    </source>
</reference>
<geneLocation type="chloroplast"/>
<gene>
    <name evidence="1" type="primary">psaA</name>
    <name type="ordered locus">Poptr_cp022</name>
</gene>
<sequence length="750" mass="83146">MIIRSPEPEVKILVDRDPIKTSFEEWARPGHFSRTIAKGPDTTTWIWNLHADAHDFDSHTSDLEEISRKVFSAHFGQLSIIFLWLSGMYFHGARFSNYEAWLSDPTHIGPSAQVVWPIVGQEILNGDVGGGFRGIQITSGFFQIWRASGITSELQLYCTAIGALVFAALMLFAGWFHYHKAAPKLAWFQDVESMLNHHLAGLLGLGSLSWAGHQVHVSLPINQFLNAGVDPKEIPLPHEFILNRDLLAQLYPSFAEGATPFFTLNWSKYSEFLTFRGGLDPVTGGLWLTDIAHHHLAIAILFLVAGHMYRTNWGIGHGIKDILEAHKGPFTGQGHKGLYEILTTSWHAQLSLNLAMLGSLTIVVAHHMYAMPPYPYLATDYGTQLSLFTHHMWIGGFLIVGAAAHAAIFMVRDYDPTTRYNDLLDRVLRHRDAIISHLNWVCIFLGFHSFGLYIHNDTMSALGRPQDMFSDTAIQLQPVFAQWIQNTHALAPGATAPGATASTSLTWGGDDLVAVGGKVALLPIPLGTADFLVHHIHAFTIHVTVLILLKGVLFARSSRLIPDKANLGFRFPCDGPGRGGTCQVSAWDHVFLGLFWMYNAISVVIFHFSWKMQSDVWGSISDQGVVTHITGGNFAQSSITINGWLRDFLWAQASQVIQSYGSSLSAYGLFFLGAHFVWAFSLMFLFSGRGYWQELIESIVWAHNKLKVAPATQPRALSIIQGRAVGVTHYLLGGIATTWAFFLARIIAVG</sequence>
<feature type="chain" id="PRO_0000294230" description="Photosystem I P700 chlorophyll a apoprotein A1">
    <location>
        <begin position="1"/>
        <end position="750"/>
    </location>
</feature>
<feature type="transmembrane region" description="Helical; Name=I" evidence="1">
    <location>
        <begin position="70"/>
        <end position="93"/>
    </location>
</feature>
<feature type="transmembrane region" description="Helical; Name=II" evidence="1">
    <location>
        <begin position="156"/>
        <end position="179"/>
    </location>
</feature>
<feature type="transmembrane region" description="Helical; Name=III" evidence="1">
    <location>
        <begin position="195"/>
        <end position="219"/>
    </location>
</feature>
<feature type="transmembrane region" description="Helical; Name=IV" evidence="1">
    <location>
        <begin position="291"/>
        <end position="309"/>
    </location>
</feature>
<feature type="transmembrane region" description="Helical; Name=V" evidence="1">
    <location>
        <begin position="346"/>
        <end position="369"/>
    </location>
</feature>
<feature type="transmembrane region" description="Helical; Name=VI" evidence="1">
    <location>
        <begin position="385"/>
        <end position="411"/>
    </location>
</feature>
<feature type="transmembrane region" description="Helical; Name=VII" evidence="1">
    <location>
        <begin position="433"/>
        <end position="455"/>
    </location>
</feature>
<feature type="transmembrane region" description="Helical; Name=VIII" evidence="1">
    <location>
        <begin position="531"/>
        <end position="549"/>
    </location>
</feature>
<feature type="transmembrane region" description="Helical; Name=IX" evidence="1">
    <location>
        <begin position="589"/>
        <end position="610"/>
    </location>
</feature>
<feature type="transmembrane region" description="Helical; Name=X" evidence="1">
    <location>
        <begin position="664"/>
        <end position="686"/>
    </location>
</feature>
<feature type="transmembrane region" description="Helical; Name=XI" evidence="1">
    <location>
        <begin position="724"/>
        <end position="744"/>
    </location>
</feature>
<feature type="binding site" evidence="1">
    <location>
        <position position="573"/>
    </location>
    <ligand>
        <name>[4Fe-4S] cluster</name>
        <dbReference type="ChEBI" id="CHEBI:49883"/>
        <note>ligand shared between dimeric partners</note>
    </ligand>
</feature>
<feature type="binding site" evidence="1">
    <location>
        <position position="582"/>
    </location>
    <ligand>
        <name>[4Fe-4S] cluster</name>
        <dbReference type="ChEBI" id="CHEBI:49883"/>
        <note>ligand shared between dimeric partners</note>
    </ligand>
</feature>
<feature type="binding site" description="axial binding residue" evidence="1">
    <location>
        <position position="675"/>
    </location>
    <ligand>
        <name>chlorophyll a'</name>
        <dbReference type="ChEBI" id="CHEBI:189419"/>
        <label>A1</label>
    </ligand>
    <ligandPart>
        <name>Mg</name>
        <dbReference type="ChEBI" id="CHEBI:25107"/>
    </ligandPart>
</feature>
<feature type="binding site" description="axial binding residue" evidence="1">
    <location>
        <position position="683"/>
    </location>
    <ligand>
        <name>chlorophyll a</name>
        <dbReference type="ChEBI" id="CHEBI:58416"/>
        <label>A3</label>
    </ligand>
    <ligandPart>
        <name>Mg</name>
        <dbReference type="ChEBI" id="CHEBI:25107"/>
    </ligandPart>
</feature>
<feature type="binding site" evidence="1">
    <location>
        <position position="691"/>
    </location>
    <ligand>
        <name>chlorophyll a</name>
        <dbReference type="ChEBI" id="CHEBI:58416"/>
        <label>A3</label>
    </ligand>
</feature>
<feature type="binding site" evidence="1">
    <location>
        <position position="692"/>
    </location>
    <ligand>
        <name>phylloquinone</name>
        <dbReference type="ChEBI" id="CHEBI:18067"/>
        <label>A</label>
    </ligand>
</feature>
<organism>
    <name type="scientific">Populus trichocarpa</name>
    <name type="common">Western balsam poplar</name>
    <name type="synonym">Populus balsamifera subsp. trichocarpa</name>
    <dbReference type="NCBI Taxonomy" id="3694"/>
    <lineage>
        <taxon>Eukaryota</taxon>
        <taxon>Viridiplantae</taxon>
        <taxon>Streptophyta</taxon>
        <taxon>Embryophyta</taxon>
        <taxon>Tracheophyta</taxon>
        <taxon>Spermatophyta</taxon>
        <taxon>Magnoliopsida</taxon>
        <taxon>eudicotyledons</taxon>
        <taxon>Gunneridae</taxon>
        <taxon>Pentapetalae</taxon>
        <taxon>rosids</taxon>
        <taxon>fabids</taxon>
        <taxon>Malpighiales</taxon>
        <taxon>Salicaceae</taxon>
        <taxon>Saliceae</taxon>
        <taxon>Populus</taxon>
    </lineage>
</organism>
<name>PSAA_POPTR</name>
<comment type="function">
    <text>PsaA and PsaB bind P700, the primary electron donor of photosystem I (PSI), as well as the electron acceptors A0, A1 and FX. PSI is a plastocyanin-ferredoxin oxidoreductase, converting photonic excitation into a charge separation, which transfers an electron from the donor P700 chlorophyll pair to the spectroscopically characterized acceptors A0, A1, FX, FA and FB in turn. Oxidized P700 is reduced on the lumenal side of the thylakoid membrane by plastocyanin.</text>
</comment>
<comment type="catalytic activity">
    <reaction evidence="1">
        <text>reduced [plastocyanin] + hnu + oxidized [2Fe-2S]-[ferredoxin] = oxidized [plastocyanin] + reduced [2Fe-2S]-[ferredoxin]</text>
        <dbReference type="Rhea" id="RHEA:30407"/>
        <dbReference type="Rhea" id="RHEA-COMP:10000"/>
        <dbReference type="Rhea" id="RHEA-COMP:10001"/>
        <dbReference type="Rhea" id="RHEA-COMP:10039"/>
        <dbReference type="Rhea" id="RHEA-COMP:10040"/>
        <dbReference type="ChEBI" id="CHEBI:29036"/>
        <dbReference type="ChEBI" id="CHEBI:30212"/>
        <dbReference type="ChEBI" id="CHEBI:33737"/>
        <dbReference type="ChEBI" id="CHEBI:33738"/>
        <dbReference type="ChEBI" id="CHEBI:49552"/>
        <dbReference type="EC" id="1.97.1.12"/>
    </reaction>
</comment>
<comment type="cofactor">
    <text evidence="1">P700 is a chlorophyll a/chlorophyll a' dimer, A0 is one or more chlorophyll a, A1 is one or both phylloquinones and FX is a shared 4Fe-4S iron-sulfur center.</text>
</comment>
<comment type="subunit">
    <text evidence="1">The PsaA/B heterodimer binds the P700 chlorophyll special pair and subsequent electron acceptors. PSI consists of a core antenna complex that captures photons, and an electron transfer chain that converts photonic excitation into a charge separation. The eukaryotic PSI reaction center is composed of at least 11 subunits.</text>
</comment>
<comment type="subcellular location">
    <subcellularLocation>
        <location evidence="1">Plastid</location>
        <location evidence="1">Chloroplast thylakoid membrane</location>
        <topology evidence="1">Multi-pass membrane protein</topology>
    </subcellularLocation>
</comment>
<comment type="similarity">
    <text evidence="1">Belongs to the PsaA/PsaB family.</text>
</comment>
<dbReference type="EC" id="1.97.1.12" evidence="1"/>
<dbReference type="EMBL" id="EF489041">
    <property type="protein sequence ID" value="ABO36704.1"/>
    <property type="molecule type" value="Genomic_DNA"/>
</dbReference>
<dbReference type="RefSeq" id="YP_001109501.1">
    <property type="nucleotide sequence ID" value="NC_009143.1"/>
</dbReference>
<dbReference type="SMR" id="A4GYR0"/>
<dbReference type="FunCoup" id="A4GYR0">
    <property type="interactions" value="354"/>
</dbReference>
<dbReference type="STRING" id="3694.A4GYR0"/>
<dbReference type="EnsemblPlants" id="Potri.013G141912.1.v4.1">
    <property type="protein sequence ID" value="Potri.013G141912.1.v4.1"/>
    <property type="gene ID" value="Potri.013G141912.v4.1"/>
</dbReference>
<dbReference type="GeneID" id="4929663"/>
<dbReference type="Gramene" id="Potri.013G141912.1.v4.1">
    <property type="protein sequence ID" value="Potri.013G141912.1.v4.1"/>
    <property type="gene ID" value="Potri.013G141912.v4.1"/>
</dbReference>
<dbReference type="KEGG" id="pop:4929663"/>
<dbReference type="eggNOG" id="ENOG502SRH2">
    <property type="taxonomic scope" value="Eukaryota"/>
</dbReference>
<dbReference type="InParanoid" id="A4GYR0"/>
<dbReference type="OMA" id="TWAFFHA"/>
<dbReference type="OrthoDB" id="349at2759"/>
<dbReference type="Proteomes" id="UP000006729">
    <property type="component" value="Chloroplast"/>
</dbReference>
<dbReference type="GO" id="GO:0009535">
    <property type="term" value="C:chloroplast thylakoid membrane"/>
    <property type="evidence" value="ECO:0007669"/>
    <property type="project" value="UniProtKB-SubCell"/>
</dbReference>
<dbReference type="GO" id="GO:0009522">
    <property type="term" value="C:photosystem I"/>
    <property type="evidence" value="ECO:0007669"/>
    <property type="project" value="UniProtKB-KW"/>
</dbReference>
<dbReference type="GO" id="GO:0051539">
    <property type="term" value="F:4 iron, 4 sulfur cluster binding"/>
    <property type="evidence" value="ECO:0007669"/>
    <property type="project" value="UniProtKB-KW"/>
</dbReference>
<dbReference type="GO" id="GO:0016168">
    <property type="term" value="F:chlorophyll binding"/>
    <property type="evidence" value="ECO:0007669"/>
    <property type="project" value="UniProtKB-KW"/>
</dbReference>
<dbReference type="GO" id="GO:0009055">
    <property type="term" value="F:electron transfer activity"/>
    <property type="evidence" value="ECO:0007669"/>
    <property type="project" value="UniProtKB-UniRule"/>
</dbReference>
<dbReference type="GO" id="GO:0000287">
    <property type="term" value="F:magnesium ion binding"/>
    <property type="evidence" value="ECO:0007669"/>
    <property type="project" value="UniProtKB-UniRule"/>
</dbReference>
<dbReference type="GO" id="GO:0016491">
    <property type="term" value="F:oxidoreductase activity"/>
    <property type="evidence" value="ECO:0007669"/>
    <property type="project" value="UniProtKB-KW"/>
</dbReference>
<dbReference type="GO" id="GO:0015979">
    <property type="term" value="P:photosynthesis"/>
    <property type="evidence" value="ECO:0007669"/>
    <property type="project" value="UniProtKB-UniRule"/>
</dbReference>
<dbReference type="FunFam" id="1.20.1130.10:FF:000001">
    <property type="entry name" value="Photosystem I P700 chlorophyll a apoprotein A2"/>
    <property type="match status" value="1"/>
</dbReference>
<dbReference type="Gene3D" id="1.20.1130.10">
    <property type="entry name" value="Photosystem I PsaA/PsaB"/>
    <property type="match status" value="1"/>
</dbReference>
<dbReference type="HAMAP" id="MF_00458">
    <property type="entry name" value="PSI_PsaA"/>
    <property type="match status" value="1"/>
</dbReference>
<dbReference type="InterPro" id="IPR006243">
    <property type="entry name" value="PSI_PsaA"/>
</dbReference>
<dbReference type="InterPro" id="IPR001280">
    <property type="entry name" value="PSI_PsaA/B"/>
</dbReference>
<dbReference type="InterPro" id="IPR020586">
    <property type="entry name" value="PSI_PsaA/B_CS"/>
</dbReference>
<dbReference type="InterPro" id="IPR036408">
    <property type="entry name" value="PSI_PsaA/B_sf"/>
</dbReference>
<dbReference type="NCBIfam" id="TIGR01335">
    <property type="entry name" value="psaA"/>
    <property type="match status" value="1"/>
</dbReference>
<dbReference type="PANTHER" id="PTHR30128">
    <property type="entry name" value="OUTER MEMBRANE PROTEIN, OMPA-RELATED"/>
    <property type="match status" value="1"/>
</dbReference>
<dbReference type="PANTHER" id="PTHR30128:SF19">
    <property type="entry name" value="PHOTOSYSTEM I P700 CHLOROPHYLL A APOPROTEIN A1-RELATED"/>
    <property type="match status" value="1"/>
</dbReference>
<dbReference type="Pfam" id="PF00223">
    <property type="entry name" value="PsaA_PsaB"/>
    <property type="match status" value="1"/>
</dbReference>
<dbReference type="PIRSF" id="PIRSF002905">
    <property type="entry name" value="PSI_A"/>
    <property type="match status" value="1"/>
</dbReference>
<dbReference type="PRINTS" id="PR00257">
    <property type="entry name" value="PHOTSYSPSAAB"/>
</dbReference>
<dbReference type="SUPFAM" id="SSF81558">
    <property type="entry name" value="Photosystem I subunits PsaA/PsaB"/>
    <property type="match status" value="1"/>
</dbReference>
<dbReference type="PROSITE" id="PS00419">
    <property type="entry name" value="PHOTOSYSTEM_I_PSAAB"/>
    <property type="match status" value="1"/>
</dbReference>
<evidence type="ECO:0000255" key="1">
    <source>
        <dbReference type="HAMAP-Rule" id="MF_00458"/>
    </source>
</evidence>
<accession>A4GYR0</accession>